<accession>P47498</accession>
<protein>
    <recommendedName>
        <fullName>Uncharacterized protein MG256</fullName>
    </recommendedName>
</protein>
<sequence>MHFNSNFKECFNKIAKKVNSLDSEYYEFSSFIERIRTTFGLLIALTVLSNLIIISFVLIWFFTDGFGQLRLLFFTLFIPFFISLLVAIFLIFLNNSFRNFFQINEKNWLFLWTCVFSSLPIFNLWLIVRLNKTIKNFASDYGFKIVNKYNSLTSGIFVFDFADYVSFEANLTNWKNTNDKNRNFVNFFETISKEKTGVVQKPVLNFQRLYVNRLYYQSKLSVGSNQQTPQTAFDNLRNYVENKQRETVRVKQYILT</sequence>
<feature type="chain" id="PRO_0000210492" description="Uncharacterized protein MG256">
    <location>
        <begin position="1"/>
        <end position="256"/>
    </location>
</feature>
<feature type="transmembrane region" description="Helical" evidence="1">
    <location>
        <begin position="42"/>
        <end position="62"/>
    </location>
</feature>
<feature type="transmembrane region" description="Helical" evidence="1">
    <location>
        <begin position="73"/>
        <end position="93"/>
    </location>
</feature>
<feature type="transmembrane region" description="Helical" evidence="1">
    <location>
        <begin position="108"/>
        <end position="128"/>
    </location>
</feature>
<evidence type="ECO:0000255" key="1"/>
<evidence type="ECO:0000305" key="2"/>
<organism>
    <name type="scientific">Mycoplasma genitalium (strain ATCC 33530 / DSM 19775 / NCTC 10195 / G37)</name>
    <name type="common">Mycoplasmoides genitalium</name>
    <dbReference type="NCBI Taxonomy" id="243273"/>
    <lineage>
        <taxon>Bacteria</taxon>
        <taxon>Bacillati</taxon>
        <taxon>Mycoplasmatota</taxon>
        <taxon>Mycoplasmoidales</taxon>
        <taxon>Mycoplasmoidaceae</taxon>
        <taxon>Mycoplasmoides</taxon>
    </lineage>
</organism>
<name>Y256_MYCGE</name>
<gene>
    <name type="ordered locus">MG256</name>
</gene>
<comment type="subcellular location">
    <subcellularLocation>
        <location evidence="2">Cell membrane</location>
        <topology evidence="2">Multi-pass membrane protein</topology>
    </subcellularLocation>
</comment>
<reference key="1">
    <citation type="journal article" date="1995" name="Science">
        <title>The minimal gene complement of Mycoplasma genitalium.</title>
        <authorList>
            <person name="Fraser C.M."/>
            <person name="Gocayne J.D."/>
            <person name="White O."/>
            <person name="Adams M.D."/>
            <person name="Clayton R.A."/>
            <person name="Fleischmann R.D."/>
            <person name="Bult C.J."/>
            <person name="Kerlavage A.R."/>
            <person name="Sutton G.G."/>
            <person name="Kelley J.M."/>
            <person name="Fritchman J.L."/>
            <person name="Weidman J.F."/>
            <person name="Small K.V."/>
            <person name="Sandusky M."/>
            <person name="Fuhrmann J.L."/>
            <person name="Nguyen D.T."/>
            <person name="Utterback T.R."/>
            <person name="Saudek D.M."/>
            <person name="Phillips C.A."/>
            <person name="Merrick J.M."/>
            <person name="Tomb J.-F."/>
            <person name="Dougherty B.A."/>
            <person name="Bott K.F."/>
            <person name="Hu P.-C."/>
            <person name="Lucier T.S."/>
            <person name="Peterson S.N."/>
            <person name="Smith H.O."/>
            <person name="Hutchison C.A. III"/>
            <person name="Venter J.C."/>
        </authorList>
    </citation>
    <scope>NUCLEOTIDE SEQUENCE [LARGE SCALE GENOMIC DNA]</scope>
    <source>
        <strain>ATCC 33530 / DSM 19775 / NCTC 10195 / G37</strain>
    </source>
</reference>
<dbReference type="EMBL" id="L43967">
    <property type="protein sequence ID" value="AAC71476.1"/>
    <property type="molecule type" value="Genomic_DNA"/>
</dbReference>
<dbReference type="PIR" id="C64228">
    <property type="entry name" value="C64228"/>
</dbReference>
<dbReference type="RefSeq" id="WP_010869397.1">
    <property type="nucleotide sequence ID" value="NC_000908.2"/>
</dbReference>
<dbReference type="SMR" id="P47498"/>
<dbReference type="STRING" id="243273.MG_256"/>
<dbReference type="GeneID" id="88282405"/>
<dbReference type="KEGG" id="mge:MG_256"/>
<dbReference type="eggNOG" id="ENOG5030N74">
    <property type="taxonomic scope" value="Bacteria"/>
</dbReference>
<dbReference type="HOGENOM" id="CLU_1076985_0_0_14"/>
<dbReference type="InParanoid" id="P47498"/>
<dbReference type="OrthoDB" id="9963317at2"/>
<dbReference type="BioCyc" id="MGEN243273:G1GJ2-306-MONOMER"/>
<dbReference type="Proteomes" id="UP000000807">
    <property type="component" value="Chromosome"/>
</dbReference>
<dbReference type="GO" id="GO:0005886">
    <property type="term" value="C:plasma membrane"/>
    <property type="evidence" value="ECO:0007669"/>
    <property type="project" value="UniProtKB-SubCell"/>
</dbReference>
<keyword id="KW-1003">Cell membrane</keyword>
<keyword id="KW-0472">Membrane</keyword>
<keyword id="KW-1185">Reference proteome</keyword>
<keyword id="KW-0812">Transmembrane</keyword>
<keyword id="KW-1133">Transmembrane helix</keyword>
<proteinExistence type="predicted"/>